<comment type="function">
    <text evidence="1">Forms oxaloacetate, a four-carbon dicarboxylic acid source for the tricarboxylic acid cycle.</text>
</comment>
<comment type="catalytic activity">
    <reaction evidence="1">
        <text>oxaloacetate + phosphate = phosphoenolpyruvate + hydrogencarbonate</text>
        <dbReference type="Rhea" id="RHEA:28370"/>
        <dbReference type="ChEBI" id="CHEBI:16452"/>
        <dbReference type="ChEBI" id="CHEBI:17544"/>
        <dbReference type="ChEBI" id="CHEBI:43474"/>
        <dbReference type="ChEBI" id="CHEBI:58702"/>
        <dbReference type="EC" id="4.1.1.31"/>
    </reaction>
</comment>
<comment type="cofactor">
    <cofactor evidence="1">
        <name>Mg(2+)</name>
        <dbReference type="ChEBI" id="CHEBI:18420"/>
    </cofactor>
</comment>
<comment type="similarity">
    <text evidence="1">Belongs to the PEPCase type 1 family.</text>
</comment>
<evidence type="ECO:0000255" key="1">
    <source>
        <dbReference type="HAMAP-Rule" id="MF_00595"/>
    </source>
</evidence>
<dbReference type="EC" id="4.1.1.31" evidence="1"/>
<dbReference type="EMBL" id="AM295007">
    <property type="protein sequence ID" value="CAM30686.1"/>
    <property type="molecule type" value="Genomic_DNA"/>
</dbReference>
<dbReference type="RefSeq" id="WP_011889057.1">
    <property type="nucleotide sequence ID" value="NC_009332.1"/>
</dbReference>
<dbReference type="SMR" id="A2RFQ7"/>
<dbReference type="KEGG" id="spf:SpyM51358"/>
<dbReference type="HOGENOM" id="CLU_006557_2_0_9"/>
<dbReference type="GO" id="GO:0005829">
    <property type="term" value="C:cytosol"/>
    <property type="evidence" value="ECO:0007669"/>
    <property type="project" value="TreeGrafter"/>
</dbReference>
<dbReference type="GO" id="GO:0000287">
    <property type="term" value="F:magnesium ion binding"/>
    <property type="evidence" value="ECO:0007669"/>
    <property type="project" value="UniProtKB-UniRule"/>
</dbReference>
<dbReference type="GO" id="GO:0008964">
    <property type="term" value="F:phosphoenolpyruvate carboxylase activity"/>
    <property type="evidence" value="ECO:0007669"/>
    <property type="project" value="UniProtKB-UniRule"/>
</dbReference>
<dbReference type="GO" id="GO:0015977">
    <property type="term" value="P:carbon fixation"/>
    <property type="evidence" value="ECO:0007669"/>
    <property type="project" value="UniProtKB-UniRule"/>
</dbReference>
<dbReference type="GO" id="GO:0006107">
    <property type="term" value="P:oxaloacetate metabolic process"/>
    <property type="evidence" value="ECO:0007669"/>
    <property type="project" value="UniProtKB-UniRule"/>
</dbReference>
<dbReference type="GO" id="GO:0006099">
    <property type="term" value="P:tricarboxylic acid cycle"/>
    <property type="evidence" value="ECO:0007669"/>
    <property type="project" value="InterPro"/>
</dbReference>
<dbReference type="Gene3D" id="1.20.1440.90">
    <property type="entry name" value="Phosphoenolpyruvate/pyruvate domain"/>
    <property type="match status" value="1"/>
</dbReference>
<dbReference type="HAMAP" id="MF_00595">
    <property type="entry name" value="PEPcase_type1"/>
    <property type="match status" value="1"/>
</dbReference>
<dbReference type="InterPro" id="IPR021135">
    <property type="entry name" value="PEP_COase"/>
</dbReference>
<dbReference type="InterPro" id="IPR022805">
    <property type="entry name" value="PEP_COase_bac/pln-type"/>
</dbReference>
<dbReference type="InterPro" id="IPR018129">
    <property type="entry name" value="PEP_COase_Lys_AS"/>
</dbReference>
<dbReference type="InterPro" id="IPR033129">
    <property type="entry name" value="PEPCASE_His_AS"/>
</dbReference>
<dbReference type="InterPro" id="IPR015813">
    <property type="entry name" value="Pyrv/PenolPyrv_kinase-like_dom"/>
</dbReference>
<dbReference type="NCBIfam" id="NF000584">
    <property type="entry name" value="PRK00009.1"/>
    <property type="match status" value="1"/>
</dbReference>
<dbReference type="PANTHER" id="PTHR30523">
    <property type="entry name" value="PHOSPHOENOLPYRUVATE CARBOXYLASE"/>
    <property type="match status" value="1"/>
</dbReference>
<dbReference type="PANTHER" id="PTHR30523:SF6">
    <property type="entry name" value="PHOSPHOENOLPYRUVATE CARBOXYLASE"/>
    <property type="match status" value="1"/>
</dbReference>
<dbReference type="Pfam" id="PF00311">
    <property type="entry name" value="PEPcase"/>
    <property type="match status" value="1"/>
</dbReference>
<dbReference type="PRINTS" id="PR00150">
    <property type="entry name" value="PEPCARBXLASE"/>
</dbReference>
<dbReference type="SUPFAM" id="SSF51621">
    <property type="entry name" value="Phosphoenolpyruvate/pyruvate domain"/>
    <property type="match status" value="1"/>
</dbReference>
<dbReference type="PROSITE" id="PS00781">
    <property type="entry name" value="PEPCASE_1"/>
    <property type="match status" value="1"/>
</dbReference>
<dbReference type="PROSITE" id="PS00393">
    <property type="entry name" value="PEPCASE_2"/>
    <property type="match status" value="1"/>
</dbReference>
<organism>
    <name type="scientific">Streptococcus pyogenes serotype M5 (strain Manfredo)</name>
    <dbReference type="NCBI Taxonomy" id="160491"/>
    <lineage>
        <taxon>Bacteria</taxon>
        <taxon>Bacillati</taxon>
        <taxon>Bacillota</taxon>
        <taxon>Bacilli</taxon>
        <taxon>Lactobacillales</taxon>
        <taxon>Streptococcaceae</taxon>
        <taxon>Streptococcus</taxon>
    </lineage>
</organism>
<reference key="1">
    <citation type="journal article" date="2007" name="J. Bacteriol.">
        <title>Complete genome of acute rheumatic fever-associated serotype M5 Streptococcus pyogenes strain Manfredo.</title>
        <authorList>
            <person name="Holden M.T.G."/>
            <person name="Scott A."/>
            <person name="Cherevach I."/>
            <person name="Chillingworth T."/>
            <person name="Churcher C."/>
            <person name="Cronin A."/>
            <person name="Dowd L."/>
            <person name="Feltwell T."/>
            <person name="Hamlin N."/>
            <person name="Holroyd S."/>
            <person name="Jagels K."/>
            <person name="Moule S."/>
            <person name="Mungall K."/>
            <person name="Quail M.A."/>
            <person name="Price C."/>
            <person name="Rabbinowitsch E."/>
            <person name="Sharp S."/>
            <person name="Skelton J."/>
            <person name="Whitehead S."/>
            <person name="Barrell B.G."/>
            <person name="Kehoe M."/>
            <person name="Parkhill J."/>
        </authorList>
    </citation>
    <scope>NUCLEOTIDE SEQUENCE [LARGE SCALE GENOMIC DNA]</scope>
    <source>
        <strain>Manfredo</strain>
    </source>
</reference>
<name>CAPP_STRPG</name>
<accession>A2RFQ7</accession>
<feature type="chain" id="PRO_1000025594" description="Phosphoenolpyruvate carboxylase">
    <location>
        <begin position="1"/>
        <end position="920"/>
    </location>
</feature>
<feature type="active site" evidence="1">
    <location>
        <position position="138"/>
    </location>
</feature>
<feature type="active site" evidence="1">
    <location>
        <position position="583"/>
    </location>
</feature>
<protein>
    <recommendedName>
        <fullName evidence="1">Phosphoenolpyruvate carboxylase</fullName>
        <shortName evidence="1">PEPC</shortName>
        <shortName evidence="1">PEPCase</shortName>
        <ecNumber evidence="1">4.1.1.31</ecNumber>
    </recommendedName>
</protein>
<gene>
    <name evidence="1" type="primary">ppc</name>
    <name type="ordered locus">SpyM51358</name>
</gene>
<keyword id="KW-0120">Carbon dioxide fixation</keyword>
<keyword id="KW-0456">Lyase</keyword>
<keyword id="KW-0460">Magnesium</keyword>
<proteinExistence type="inferred from homology"/>
<sequence>MPLKKLESSNNQAIIAEEVALLKEMLENITRRMIGDDAFTVIESIMVLSEKQDYIELEKVVANISNQEMEVISRYFSILPLLINISEDVDLAYEINYQNNTDTDYLGKLALTIKDLAGKDNGKDILEQVNVVPVLTAHPTQVQRKTILELTTHIHKLLRKYRDAKAGVISLEKWRQELYRYIEMIMQTDIIREKKLQVKNEIKNVMQYYDGSLIQAVTKLTTEYKNLAQKHGLELDNPKPITMGMWIGGDRDGNPFVTAETLCLSATVQSEVILNYYIDKLAALYRTFSLSSTLVQPNSEVERLASLSQDQSIYRGNEPYRRAFHYIQSRLKQTQIQLTNQPAARMSSSVGLSTSAWSSPASLENPILAYDSPVDFKADLKAIEQSLLDNGNSALIEGDLREVMQAVDIFGFFLASIDMRQDSSVQEACVAELLKGANIVDDYSSLSETEKCDVLVQQLMEEPRTLSSAAVAKSDLLEKELAIYTTARELKDKLGEEVIKQHIISHTESVSDMFELAIMLKEVGLVDQQRARVQIVPLFETIEDLDNARDIMAAYLSHDIVKSWIATNRNYQEIMLGYSDSNKDGGYLASGWTLYKAQNELTAIGEEHGVKITFFHGRGGTVGRGGGPSYDAITSQPFGSIKDRIRLTEQGEIIENKYGNKDVAYYHLEMLISASINRMVTQMITDPNEIDSFREIMDSIVADSNIIYRKLVFDNPHFYDYFFEASPIKEVSSLNIGSRPAARKTITEITGLRAIPWVFSWSQNRIMFPGWYGVGSAFKRYIDRAQGNLERLQHMYQTWPFFHSLLSNVDMVLSKSNMNIAFQYAQLAESQDVRDVFYEILDEWQLTKNVILAIQDHDDLLEDNPSLKHSLKSRLPYFNVLNYIQIELIKRWRNNQLDENDEKLIHTTINGIATGLRNSG</sequence>